<keyword id="KW-0963">Cytoplasm</keyword>
<keyword id="KW-0312">Gluconeogenesis</keyword>
<keyword id="KW-0324">Glycolysis</keyword>
<keyword id="KW-0413">Isomerase</keyword>
<comment type="function">
    <text evidence="1">Involved in the gluconeogenesis. Catalyzes stereospecifically the conversion of dihydroxyacetone phosphate (DHAP) to D-glyceraldehyde-3-phosphate (G3P).</text>
</comment>
<comment type="catalytic activity">
    <reaction evidence="1">
        <text>D-glyceraldehyde 3-phosphate = dihydroxyacetone phosphate</text>
        <dbReference type="Rhea" id="RHEA:18585"/>
        <dbReference type="ChEBI" id="CHEBI:57642"/>
        <dbReference type="ChEBI" id="CHEBI:59776"/>
        <dbReference type="EC" id="5.3.1.1"/>
    </reaction>
</comment>
<comment type="pathway">
    <text evidence="1">Carbohydrate biosynthesis; gluconeogenesis.</text>
</comment>
<comment type="pathway">
    <text evidence="1">Carbohydrate degradation; glycolysis; D-glyceraldehyde 3-phosphate from glycerone phosphate: step 1/1.</text>
</comment>
<comment type="subunit">
    <text evidence="1">Homodimer.</text>
</comment>
<comment type="subcellular location">
    <subcellularLocation>
        <location evidence="1">Cytoplasm</location>
    </subcellularLocation>
</comment>
<comment type="similarity">
    <text evidence="1">Belongs to the triosephosphate isomerase family.</text>
</comment>
<evidence type="ECO:0000255" key="1">
    <source>
        <dbReference type="HAMAP-Rule" id="MF_00147"/>
    </source>
</evidence>
<name>TPIS_SYNJA</name>
<accession>Q2JX75</accession>
<dbReference type="EC" id="5.3.1.1" evidence="1"/>
<dbReference type="EMBL" id="CP000239">
    <property type="protein sequence ID" value="ABC98617.1"/>
    <property type="molecule type" value="Genomic_DNA"/>
</dbReference>
<dbReference type="RefSeq" id="WP_011429306.1">
    <property type="nucleotide sequence ID" value="NC_007775.1"/>
</dbReference>
<dbReference type="SMR" id="Q2JX75"/>
<dbReference type="STRING" id="321327.CYA_0398"/>
<dbReference type="KEGG" id="cya:CYA_0398"/>
<dbReference type="eggNOG" id="COG0149">
    <property type="taxonomic scope" value="Bacteria"/>
</dbReference>
<dbReference type="HOGENOM" id="CLU_024251_2_3_3"/>
<dbReference type="OrthoDB" id="9809429at2"/>
<dbReference type="UniPathway" id="UPA00109">
    <property type="reaction ID" value="UER00189"/>
</dbReference>
<dbReference type="UniPathway" id="UPA00138"/>
<dbReference type="Proteomes" id="UP000008818">
    <property type="component" value="Chromosome"/>
</dbReference>
<dbReference type="GO" id="GO:0005829">
    <property type="term" value="C:cytosol"/>
    <property type="evidence" value="ECO:0007669"/>
    <property type="project" value="TreeGrafter"/>
</dbReference>
<dbReference type="GO" id="GO:0004807">
    <property type="term" value="F:triose-phosphate isomerase activity"/>
    <property type="evidence" value="ECO:0007669"/>
    <property type="project" value="UniProtKB-UniRule"/>
</dbReference>
<dbReference type="GO" id="GO:0006094">
    <property type="term" value="P:gluconeogenesis"/>
    <property type="evidence" value="ECO:0007669"/>
    <property type="project" value="UniProtKB-UniRule"/>
</dbReference>
<dbReference type="GO" id="GO:0046166">
    <property type="term" value="P:glyceraldehyde-3-phosphate biosynthetic process"/>
    <property type="evidence" value="ECO:0007669"/>
    <property type="project" value="TreeGrafter"/>
</dbReference>
<dbReference type="GO" id="GO:0019563">
    <property type="term" value="P:glycerol catabolic process"/>
    <property type="evidence" value="ECO:0007669"/>
    <property type="project" value="TreeGrafter"/>
</dbReference>
<dbReference type="GO" id="GO:0006096">
    <property type="term" value="P:glycolytic process"/>
    <property type="evidence" value="ECO:0007669"/>
    <property type="project" value="UniProtKB-UniRule"/>
</dbReference>
<dbReference type="CDD" id="cd00311">
    <property type="entry name" value="TIM"/>
    <property type="match status" value="1"/>
</dbReference>
<dbReference type="FunFam" id="3.20.20.70:FF:000016">
    <property type="entry name" value="Triosephosphate isomerase"/>
    <property type="match status" value="1"/>
</dbReference>
<dbReference type="Gene3D" id="3.20.20.70">
    <property type="entry name" value="Aldolase class I"/>
    <property type="match status" value="1"/>
</dbReference>
<dbReference type="HAMAP" id="MF_00147_B">
    <property type="entry name" value="TIM_B"/>
    <property type="match status" value="1"/>
</dbReference>
<dbReference type="InterPro" id="IPR013785">
    <property type="entry name" value="Aldolase_TIM"/>
</dbReference>
<dbReference type="InterPro" id="IPR035990">
    <property type="entry name" value="TIM_sf"/>
</dbReference>
<dbReference type="InterPro" id="IPR022896">
    <property type="entry name" value="TrioseP_Isoase_bac/euk"/>
</dbReference>
<dbReference type="InterPro" id="IPR000652">
    <property type="entry name" value="Triosephosphate_isomerase"/>
</dbReference>
<dbReference type="InterPro" id="IPR020861">
    <property type="entry name" value="Triosephosphate_isomerase_AS"/>
</dbReference>
<dbReference type="NCBIfam" id="TIGR00419">
    <property type="entry name" value="tim"/>
    <property type="match status" value="1"/>
</dbReference>
<dbReference type="PANTHER" id="PTHR21139">
    <property type="entry name" value="TRIOSEPHOSPHATE ISOMERASE"/>
    <property type="match status" value="1"/>
</dbReference>
<dbReference type="PANTHER" id="PTHR21139:SF42">
    <property type="entry name" value="TRIOSEPHOSPHATE ISOMERASE"/>
    <property type="match status" value="1"/>
</dbReference>
<dbReference type="Pfam" id="PF00121">
    <property type="entry name" value="TIM"/>
    <property type="match status" value="1"/>
</dbReference>
<dbReference type="SUPFAM" id="SSF51351">
    <property type="entry name" value="Triosephosphate isomerase (TIM)"/>
    <property type="match status" value="1"/>
</dbReference>
<dbReference type="PROSITE" id="PS00171">
    <property type="entry name" value="TIM_1"/>
    <property type="match status" value="1"/>
</dbReference>
<dbReference type="PROSITE" id="PS51440">
    <property type="entry name" value="TIM_2"/>
    <property type="match status" value="1"/>
</dbReference>
<protein>
    <recommendedName>
        <fullName evidence="1">Triosephosphate isomerase</fullName>
        <shortName evidence="1">TIM</shortName>
        <shortName evidence="1">TPI</shortName>
        <ecNumber evidence="1">5.3.1.1</ecNumber>
    </recommendedName>
    <alternativeName>
        <fullName evidence="1">Triose-phosphate isomerase</fullName>
    </alternativeName>
</protein>
<proteinExistence type="inferred from homology"/>
<reference key="1">
    <citation type="journal article" date="2007" name="ISME J.">
        <title>Population level functional diversity in a microbial community revealed by comparative genomic and metagenomic analyses.</title>
        <authorList>
            <person name="Bhaya D."/>
            <person name="Grossman A.R."/>
            <person name="Steunou A.-S."/>
            <person name="Khuri N."/>
            <person name="Cohan F.M."/>
            <person name="Hamamura N."/>
            <person name="Melendrez M.C."/>
            <person name="Bateson M.M."/>
            <person name="Ward D.M."/>
            <person name="Heidelberg J.F."/>
        </authorList>
    </citation>
    <scope>NUCLEOTIDE SEQUENCE [LARGE SCALE GENOMIC DNA]</scope>
    <source>
        <strain>JA-3-3Ab</strain>
    </source>
</reference>
<feature type="chain" id="PRO_0000307587" description="Triosephosphate isomerase">
    <location>
        <begin position="1"/>
        <end position="255"/>
    </location>
</feature>
<feature type="active site" description="Electrophile" evidence="1">
    <location>
        <position position="100"/>
    </location>
</feature>
<feature type="active site" description="Proton acceptor" evidence="1">
    <location>
        <position position="169"/>
    </location>
</feature>
<feature type="binding site" evidence="1">
    <location>
        <begin position="9"/>
        <end position="11"/>
    </location>
    <ligand>
        <name>substrate</name>
    </ligand>
</feature>
<feature type="binding site" evidence="1">
    <location>
        <position position="175"/>
    </location>
    <ligand>
        <name>substrate</name>
    </ligand>
</feature>
<feature type="binding site" evidence="1">
    <location>
        <position position="208"/>
    </location>
    <ligand>
        <name>substrate</name>
    </ligand>
</feature>
<feature type="binding site" evidence="1">
    <location>
        <begin position="229"/>
        <end position="230"/>
    </location>
    <ligand>
        <name>substrate</name>
    </ligand>
</feature>
<gene>
    <name evidence="1" type="primary">tpiA</name>
    <name type="ordered locus">CYA_0398</name>
</gene>
<organism>
    <name type="scientific">Synechococcus sp. (strain JA-3-3Ab)</name>
    <name type="common">Cyanobacteria bacterium Yellowstone A-Prime</name>
    <dbReference type="NCBI Taxonomy" id="321327"/>
    <lineage>
        <taxon>Bacteria</taxon>
        <taxon>Bacillati</taxon>
        <taxon>Cyanobacteriota</taxon>
        <taxon>Cyanophyceae</taxon>
        <taxon>Synechococcales</taxon>
        <taxon>Synechococcaceae</taxon>
        <taxon>Synechococcus</taxon>
    </lineage>
</organism>
<sequence length="255" mass="27647">MRPILIAGNWKMHKTQAEARQFLREFRPALQASSAGVRPQRQIILCVPFTDLAVVVEETRGSGMAVGAQNLHWEDQGAFTGEISGPMLAELGVRYVIVGHSERRQYFGETDETVNRRLAAAQRHGLTPILCVGESLQQREQGLTESWIVGQLDRALPGIDLRNLVIAYEPIWAIGTGKTCAAAEANRVIGLIRQHLGADHLPILYGGSVKASNIDELMAQPQIDGVLVGGASLDPQEFARIVNFQALTPAAAAAP</sequence>